<gene>
    <name evidence="1" type="primary">rpoA</name>
    <name type="ordered locus">Sbal_4145</name>
</gene>
<evidence type="ECO:0000255" key="1">
    <source>
        <dbReference type="HAMAP-Rule" id="MF_00059"/>
    </source>
</evidence>
<proteinExistence type="inferred from homology"/>
<organism>
    <name type="scientific">Shewanella baltica (strain OS155 / ATCC BAA-1091)</name>
    <dbReference type="NCBI Taxonomy" id="325240"/>
    <lineage>
        <taxon>Bacteria</taxon>
        <taxon>Pseudomonadati</taxon>
        <taxon>Pseudomonadota</taxon>
        <taxon>Gammaproteobacteria</taxon>
        <taxon>Alteromonadales</taxon>
        <taxon>Shewanellaceae</taxon>
        <taxon>Shewanella</taxon>
    </lineage>
</organism>
<feature type="chain" id="PRO_0000323652" description="DNA-directed RNA polymerase subunit alpha">
    <location>
        <begin position="1"/>
        <end position="329"/>
    </location>
</feature>
<feature type="region of interest" description="Alpha N-terminal domain (alpha-NTD)" evidence="1">
    <location>
        <begin position="1"/>
        <end position="234"/>
    </location>
</feature>
<feature type="region of interest" description="Alpha C-terminal domain (alpha-CTD)" evidence="1">
    <location>
        <begin position="248"/>
        <end position="329"/>
    </location>
</feature>
<reference key="1">
    <citation type="submission" date="2007-02" db="EMBL/GenBank/DDBJ databases">
        <title>Complete sequence of chromosome of Shewanella baltica OS155.</title>
        <authorList>
            <consortium name="US DOE Joint Genome Institute"/>
            <person name="Copeland A."/>
            <person name="Lucas S."/>
            <person name="Lapidus A."/>
            <person name="Barry K."/>
            <person name="Detter J.C."/>
            <person name="Glavina del Rio T."/>
            <person name="Hammon N."/>
            <person name="Israni S."/>
            <person name="Dalin E."/>
            <person name="Tice H."/>
            <person name="Pitluck S."/>
            <person name="Sims D.R."/>
            <person name="Brettin T."/>
            <person name="Bruce D."/>
            <person name="Han C."/>
            <person name="Tapia R."/>
            <person name="Brainard J."/>
            <person name="Schmutz J."/>
            <person name="Larimer F."/>
            <person name="Land M."/>
            <person name="Hauser L."/>
            <person name="Kyrpides N."/>
            <person name="Mikhailova N."/>
            <person name="Brettar I."/>
            <person name="Klappenbach J."/>
            <person name="Konstantinidis K."/>
            <person name="Rodrigues J."/>
            <person name="Tiedje J."/>
            <person name="Richardson P."/>
        </authorList>
    </citation>
    <scope>NUCLEOTIDE SEQUENCE [LARGE SCALE GENOMIC DNA]</scope>
    <source>
        <strain>OS155 / ATCC BAA-1091</strain>
    </source>
</reference>
<accession>A3DA47</accession>
<keyword id="KW-0240">DNA-directed RNA polymerase</keyword>
<keyword id="KW-0548">Nucleotidyltransferase</keyword>
<keyword id="KW-1185">Reference proteome</keyword>
<keyword id="KW-0804">Transcription</keyword>
<keyword id="KW-0808">Transferase</keyword>
<name>RPOA_SHEB5</name>
<sequence length="329" mass="36156">MQGSVTEFLKPRLVDIEQVNSTRAKVTLEPLERGFGHTLGNALRRILLSSMPGCAVTEVEIDGVLHEYSSKEGVQEDILEILLNLKGLAVTIEGKDEAMLTLSKSGAGPVIAADITHDGDVTIVNPDHIICHLTGNNDISMRIRVERGRGYVPASARAQTEDDDRPIGRLLVDASFSPVARIAYNVEAARVEQRTDLDKLVIDMTTNGTIDPEEAIRRSATILAEQLDAFVELRDVTEPELKEEKPEFDPILLRPVDDLELTVRSANCLKAEAIHYIGDLVQRTEVELLKTPNLGKKSLTEIKDVLASRGLSLGMRLENWPPASLADDL</sequence>
<dbReference type="EC" id="2.7.7.6" evidence="1"/>
<dbReference type="EMBL" id="CP000563">
    <property type="protein sequence ID" value="ABN63610.1"/>
    <property type="molecule type" value="Genomic_DNA"/>
</dbReference>
<dbReference type="RefSeq" id="WP_006083574.1">
    <property type="nucleotide sequence ID" value="NC_009052.1"/>
</dbReference>
<dbReference type="SMR" id="A3DA47"/>
<dbReference type="STRING" id="325240.Sbal_4145"/>
<dbReference type="KEGG" id="sbl:Sbal_4145"/>
<dbReference type="HOGENOM" id="CLU_053084_0_0_6"/>
<dbReference type="OrthoDB" id="9805706at2"/>
<dbReference type="Proteomes" id="UP000001557">
    <property type="component" value="Chromosome"/>
</dbReference>
<dbReference type="GO" id="GO:0005737">
    <property type="term" value="C:cytoplasm"/>
    <property type="evidence" value="ECO:0007669"/>
    <property type="project" value="UniProtKB-ARBA"/>
</dbReference>
<dbReference type="GO" id="GO:0000428">
    <property type="term" value="C:DNA-directed RNA polymerase complex"/>
    <property type="evidence" value="ECO:0007669"/>
    <property type="project" value="UniProtKB-KW"/>
</dbReference>
<dbReference type="GO" id="GO:0003677">
    <property type="term" value="F:DNA binding"/>
    <property type="evidence" value="ECO:0007669"/>
    <property type="project" value="UniProtKB-UniRule"/>
</dbReference>
<dbReference type="GO" id="GO:0003899">
    <property type="term" value="F:DNA-directed RNA polymerase activity"/>
    <property type="evidence" value="ECO:0007669"/>
    <property type="project" value="UniProtKB-UniRule"/>
</dbReference>
<dbReference type="GO" id="GO:0046983">
    <property type="term" value="F:protein dimerization activity"/>
    <property type="evidence" value="ECO:0007669"/>
    <property type="project" value="InterPro"/>
</dbReference>
<dbReference type="GO" id="GO:0006351">
    <property type="term" value="P:DNA-templated transcription"/>
    <property type="evidence" value="ECO:0007669"/>
    <property type="project" value="UniProtKB-UniRule"/>
</dbReference>
<dbReference type="CDD" id="cd06928">
    <property type="entry name" value="RNAP_alpha_NTD"/>
    <property type="match status" value="1"/>
</dbReference>
<dbReference type="FunFam" id="1.10.150.20:FF:000001">
    <property type="entry name" value="DNA-directed RNA polymerase subunit alpha"/>
    <property type="match status" value="1"/>
</dbReference>
<dbReference type="FunFam" id="2.170.120.12:FF:000001">
    <property type="entry name" value="DNA-directed RNA polymerase subunit alpha"/>
    <property type="match status" value="1"/>
</dbReference>
<dbReference type="Gene3D" id="1.10.150.20">
    <property type="entry name" value="5' to 3' exonuclease, C-terminal subdomain"/>
    <property type="match status" value="1"/>
</dbReference>
<dbReference type="Gene3D" id="2.170.120.12">
    <property type="entry name" value="DNA-directed RNA polymerase, insert domain"/>
    <property type="match status" value="1"/>
</dbReference>
<dbReference type="Gene3D" id="3.30.1360.10">
    <property type="entry name" value="RNA polymerase, RBP11-like subunit"/>
    <property type="match status" value="1"/>
</dbReference>
<dbReference type="HAMAP" id="MF_00059">
    <property type="entry name" value="RNApol_bact_RpoA"/>
    <property type="match status" value="1"/>
</dbReference>
<dbReference type="InterPro" id="IPR011262">
    <property type="entry name" value="DNA-dir_RNA_pol_insert"/>
</dbReference>
<dbReference type="InterPro" id="IPR011263">
    <property type="entry name" value="DNA-dir_RNA_pol_RpoA/D/Rpb3"/>
</dbReference>
<dbReference type="InterPro" id="IPR011773">
    <property type="entry name" value="DNA-dir_RpoA"/>
</dbReference>
<dbReference type="InterPro" id="IPR036603">
    <property type="entry name" value="RBP11-like"/>
</dbReference>
<dbReference type="InterPro" id="IPR011260">
    <property type="entry name" value="RNAP_asu_C"/>
</dbReference>
<dbReference type="InterPro" id="IPR036643">
    <property type="entry name" value="RNApol_insert_sf"/>
</dbReference>
<dbReference type="NCBIfam" id="NF003513">
    <property type="entry name" value="PRK05182.1-2"/>
    <property type="match status" value="1"/>
</dbReference>
<dbReference type="NCBIfam" id="NF003519">
    <property type="entry name" value="PRK05182.2-5"/>
    <property type="match status" value="1"/>
</dbReference>
<dbReference type="NCBIfam" id="TIGR02027">
    <property type="entry name" value="rpoA"/>
    <property type="match status" value="1"/>
</dbReference>
<dbReference type="Pfam" id="PF01000">
    <property type="entry name" value="RNA_pol_A_bac"/>
    <property type="match status" value="1"/>
</dbReference>
<dbReference type="Pfam" id="PF03118">
    <property type="entry name" value="RNA_pol_A_CTD"/>
    <property type="match status" value="1"/>
</dbReference>
<dbReference type="Pfam" id="PF01193">
    <property type="entry name" value="RNA_pol_L"/>
    <property type="match status" value="1"/>
</dbReference>
<dbReference type="SMART" id="SM00662">
    <property type="entry name" value="RPOLD"/>
    <property type="match status" value="1"/>
</dbReference>
<dbReference type="SUPFAM" id="SSF47789">
    <property type="entry name" value="C-terminal domain of RNA polymerase alpha subunit"/>
    <property type="match status" value="1"/>
</dbReference>
<dbReference type="SUPFAM" id="SSF56553">
    <property type="entry name" value="Insert subdomain of RNA polymerase alpha subunit"/>
    <property type="match status" value="1"/>
</dbReference>
<dbReference type="SUPFAM" id="SSF55257">
    <property type="entry name" value="RBP11-like subunits of RNA polymerase"/>
    <property type="match status" value="1"/>
</dbReference>
<comment type="function">
    <text evidence="1">DNA-dependent RNA polymerase catalyzes the transcription of DNA into RNA using the four ribonucleoside triphosphates as substrates.</text>
</comment>
<comment type="catalytic activity">
    <reaction evidence="1">
        <text>RNA(n) + a ribonucleoside 5'-triphosphate = RNA(n+1) + diphosphate</text>
        <dbReference type="Rhea" id="RHEA:21248"/>
        <dbReference type="Rhea" id="RHEA-COMP:14527"/>
        <dbReference type="Rhea" id="RHEA-COMP:17342"/>
        <dbReference type="ChEBI" id="CHEBI:33019"/>
        <dbReference type="ChEBI" id="CHEBI:61557"/>
        <dbReference type="ChEBI" id="CHEBI:140395"/>
        <dbReference type="EC" id="2.7.7.6"/>
    </reaction>
</comment>
<comment type="subunit">
    <text evidence="1">Homodimer. The RNAP catalytic core consists of 2 alpha, 1 beta, 1 beta' and 1 omega subunit. When a sigma factor is associated with the core the holoenzyme is formed, which can initiate transcription.</text>
</comment>
<comment type="domain">
    <text evidence="1">The N-terminal domain is essential for RNAP assembly and basal transcription, whereas the C-terminal domain is involved in interaction with transcriptional regulators and with upstream promoter elements.</text>
</comment>
<comment type="similarity">
    <text evidence="1">Belongs to the RNA polymerase alpha chain family.</text>
</comment>
<protein>
    <recommendedName>
        <fullName evidence="1">DNA-directed RNA polymerase subunit alpha</fullName>
        <shortName evidence="1">RNAP subunit alpha</shortName>
        <ecNumber evidence="1">2.7.7.6</ecNumber>
    </recommendedName>
    <alternativeName>
        <fullName evidence="1">RNA polymerase subunit alpha</fullName>
    </alternativeName>
    <alternativeName>
        <fullName evidence="1">Transcriptase subunit alpha</fullName>
    </alternativeName>
</protein>